<dbReference type="EMBL" id="AF176703">
    <property type="protein sequence ID" value="AAF03703.1"/>
    <property type="molecule type" value="mRNA"/>
</dbReference>
<dbReference type="EMBL" id="BC048098">
    <property type="protein sequence ID" value="AAH48098.1"/>
    <property type="molecule type" value="mRNA"/>
</dbReference>
<dbReference type="EMBL" id="CR749719">
    <property type="protein sequence ID" value="CAH18486.1"/>
    <property type="molecule type" value="mRNA"/>
</dbReference>
<dbReference type="EMBL" id="AF129534">
    <property type="protein sequence ID" value="AAF04468.1"/>
    <property type="molecule type" value="mRNA"/>
</dbReference>
<dbReference type="CCDS" id="CCDS3938.1">
    <molecule id="Q9UKT5-1"/>
</dbReference>
<dbReference type="CCDS" id="CCDS3939.1">
    <molecule id="Q9UKT5-2"/>
</dbReference>
<dbReference type="RefSeq" id="NP_036308.1">
    <molecule id="Q9UKT5-1"/>
    <property type="nucleotide sequence ID" value="NM_012176.3"/>
</dbReference>
<dbReference type="RefSeq" id="NP_277019.1">
    <molecule id="Q9UKT5-2"/>
    <property type="nucleotide sequence ID" value="NM_033484.3"/>
</dbReference>
<dbReference type="PDB" id="3L2O">
    <property type="method" value="X-ray"/>
    <property type="resolution" value="2.80 A"/>
    <property type="chains" value="B=55-387"/>
</dbReference>
<dbReference type="PDB" id="3L82">
    <property type="method" value="X-ray"/>
    <property type="resolution" value="2.40 A"/>
    <property type="chains" value="B=162-387"/>
</dbReference>
<dbReference type="PDB" id="9JKB">
    <property type="method" value="EM"/>
    <property type="resolution" value="3.93 A"/>
    <property type="chains" value="C/D=54-387"/>
</dbReference>
<dbReference type="PDBsum" id="3L2O"/>
<dbReference type="PDBsum" id="3L82"/>
<dbReference type="PDBsum" id="9JKB"/>
<dbReference type="EMDB" id="EMD-61550"/>
<dbReference type="SMR" id="Q9UKT5"/>
<dbReference type="BioGRID" id="117656">
    <property type="interactions" value="42"/>
</dbReference>
<dbReference type="ComplexPortal" id="CPX-7882">
    <property type="entry name" value="SCF E3 ubiquitin ligase complex, FBXO4 variant"/>
</dbReference>
<dbReference type="FunCoup" id="Q9UKT5">
    <property type="interactions" value="421"/>
</dbReference>
<dbReference type="IntAct" id="Q9UKT5">
    <property type="interactions" value="17"/>
</dbReference>
<dbReference type="MINT" id="Q9UKT5"/>
<dbReference type="STRING" id="9606.ENSP00000281623"/>
<dbReference type="GlyGen" id="Q9UKT5">
    <property type="glycosylation" value="1 site, 1 O-linked glycan (1 site)"/>
</dbReference>
<dbReference type="iPTMnet" id="Q9UKT5"/>
<dbReference type="PhosphoSitePlus" id="Q9UKT5"/>
<dbReference type="BioMuta" id="FBXO4"/>
<dbReference type="DMDM" id="60416426"/>
<dbReference type="jPOST" id="Q9UKT5"/>
<dbReference type="MassIVE" id="Q9UKT5"/>
<dbReference type="PaxDb" id="9606-ENSP00000281623"/>
<dbReference type="PeptideAtlas" id="Q9UKT5"/>
<dbReference type="ProteomicsDB" id="84849">
    <molecule id="Q9UKT5-1"/>
</dbReference>
<dbReference type="ProteomicsDB" id="84850">
    <molecule id="Q9UKT5-2"/>
</dbReference>
<dbReference type="Pumba" id="Q9UKT5"/>
<dbReference type="Antibodypedia" id="23214">
    <property type="antibodies" value="283 antibodies from 29 providers"/>
</dbReference>
<dbReference type="DNASU" id="26272"/>
<dbReference type="Ensembl" id="ENST00000281623.8">
    <molecule id="Q9UKT5-1"/>
    <property type="protein sequence ID" value="ENSP00000281623.3"/>
    <property type="gene ID" value="ENSG00000151876.13"/>
</dbReference>
<dbReference type="Ensembl" id="ENST00000296812.6">
    <molecule id="Q9UKT5-2"/>
    <property type="protein sequence ID" value="ENSP00000296812.2"/>
    <property type="gene ID" value="ENSG00000151876.13"/>
</dbReference>
<dbReference type="GeneID" id="26272"/>
<dbReference type="KEGG" id="hsa:26272"/>
<dbReference type="MANE-Select" id="ENST00000281623.8">
    <property type="protein sequence ID" value="ENSP00000281623.3"/>
    <property type="RefSeq nucleotide sequence ID" value="NM_012176.3"/>
    <property type="RefSeq protein sequence ID" value="NP_036308.1"/>
</dbReference>
<dbReference type="UCSC" id="uc003jmp.4">
    <molecule id="Q9UKT5-1"/>
    <property type="organism name" value="human"/>
</dbReference>
<dbReference type="AGR" id="HGNC:13583"/>
<dbReference type="CTD" id="26272"/>
<dbReference type="DisGeNET" id="26272"/>
<dbReference type="GeneCards" id="FBXO4"/>
<dbReference type="HGNC" id="HGNC:13583">
    <property type="gene designation" value="FBXO4"/>
</dbReference>
<dbReference type="HPA" id="ENSG00000151876">
    <property type="expression patterns" value="Low tissue specificity"/>
</dbReference>
<dbReference type="MIM" id="609090">
    <property type="type" value="gene"/>
</dbReference>
<dbReference type="neXtProt" id="NX_Q9UKT5"/>
<dbReference type="OpenTargets" id="ENSG00000151876"/>
<dbReference type="PharmGKB" id="PA28044"/>
<dbReference type="VEuPathDB" id="HostDB:ENSG00000151876"/>
<dbReference type="eggNOG" id="ENOG502QUXD">
    <property type="taxonomic scope" value="Eukaryota"/>
</dbReference>
<dbReference type="GeneTree" id="ENSGT00390000014416"/>
<dbReference type="HOGENOM" id="CLU_064324_0_0_1"/>
<dbReference type="InParanoid" id="Q9UKT5"/>
<dbReference type="OMA" id="HYSVIAQ"/>
<dbReference type="OrthoDB" id="3219396at2759"/>
<dbReference type="PAN-GO" id="Q9UKT5">
    <property type="GO annotations" value="3 GO annotations based on evolutionary models"/>
</dbReference>
<dbReference type="PhylomeDB" id="Q9UKT5"/>
<dbReference type="TreeFam" id="TF331105"/>
<dbReference type="PathwayCommons" id="Q9UKT5"/>
<dbReference type="Reactome" id="R-HSA-390471">
    <property type="pathway name" value="Association of TriC/CCT with target proteins during biosynthesis"/>
</dbReference>
<dbReference type="Reactome" id="R-HSA-8951664">
    <property type="pathway name" value="Neddylation"/>
</dbReference>
<dbReference type="Reactome" id="R-HSA-983168">
    <property type="pathway name" value="Antigen processing: Ubiquitination &amp; Proteasome degradation"/>
</dbReference>
<dbReference type="SignaLink" id="Q9UKT5"/>
<dbReference type="SIGNOR" id="Q9UKT5"/>
<dbReference type="UniPathway" id="UPA00143"/>
<dbReference type="BioGRID-ORCS" id="26272">
    <property type="hits" value="7 hits in 1193 CRISPR screens"/>
</dbReference>
<dbReference type="ChiTaRS" id="FBXO4">
    <property type="organism name" value="human"/>
</dbReference>
<dbReference type="EvolutionaryTrace" id="Q9UKT5"/>
<dbReference type="GeneWiki" id="FBXO4"/>
<dbReference type="GenomeRNAi" id="26272"/>
<dbReference type="Pharos" id="Q9UKT5">
    <property type="development level" value="Tbio"/>
</dbReference>
<dbReference type="PRO" id="PR:Q9UKT5"/>
<dbReference type="Proteomes" id="UP000005640">
    <property type="component" value="Chromosome 5"/>
</dbReference>
<dbReference type="RNAct" id="Q9UKT5">
    <property type="molecule type" value="protein"/>
</dbReference>
<dbReference type="Bgee" id="ENSG00000151876">
    <property type="expression patterns" value="Expressed in calcaneal tendon and 143 other cell types or tissues"/>
</dbReference>
<dbReference type="ExpressionAtlas" id="Q9UKT5">
    <property type="expression patterns" value="baseline and differential"/>
</dbReference>
<dbReference type="GO" id="GO:0005737">
    <property type="term" value="C:cytoplasm"/>
    <property type="evidence" value="ECO:0000314"/>
    <property type="project" value="ParkinsonsUK-UCL"/>
</dbReference>
<dbReference type="GO" id="GO:0005829">
    <property type="term" value="C:cytosol"/>
    <property type="evidence" value="ECO:0000304"/>
    <property type="project" value="Reactome"/>
</dbReference>
<dbReference type="GO" id="GO:0019005">
    <property type="term" value="C:SCF ubiquitin ligase complex"/>
    <property type="evidence" value="ECO:0000314"/>
    <property type="project" value="UniProtKB"/>
</dbReference>
<dbReference type="GO" id="GO:0000151">
    <property type="term" value="C:ubiquitin ligase complex"/>
    <property type="evidence" value="ECO:0000314"/>
    <property type="project" value="UniProtKB"/>
</dbReference>
<dbReference type="GO" id="GO:0042803">
    <property type="term" value="F:protein homodimerization activity"/>
    <property type="evidence" value="ECO:0000353"/>
    <property type="project" value="UniProtKB"/>
</dbReference>
<dbReference type="GO" id="GO:0061630">
    <property type="term" value="F:ubiquitin protein ligase activity"/>
    <property type="evidence" value="ECO:0007669"/>
    <property type="project" value="Ensembl"/>
</dbReference>
<dbReference type="GO" id="GO:1990756">
    <property type="term" value="F:ubiquitin-like ligase-substrate adaptor activity"/>
    <property type="evidence" value="ECO:0000314"/>
    <property type="project" value="UniProtKB"/>
</dbReference>
<dbReference type="GO" id="GO:0004842">
    <property type="term" value="F:ubiquitin-protein transferase activity"/>
    <property type="evidence" value="ECO:0000314"/>
    <property type="project" value="UniProtKB"/>
</dbReference>
<dbReference type="GO" id="GO:0019725">
    <property type="term" value="P:cellular homeostasis"/>
    <property type="evidence" value="ECO:0007669"/>
    <property type="project" value="Ensembl"/>
</dbReference>
<dbReference type="GO" id="GO:0071479">
    <property type="term" value="P:cellular response to ionizing radiation"/>
    <property type="evidence" value="ECO:0007669"/>
    <property type="project" value="Ensembl"/>
</dbReference>
<dbReference type="GO" id="GO:0090398">
    <property type="term" value="P:cellular senescence"/>
    <property type="evidence" value="ECO:0007669"/>
    <property type="project" value="Ensembl"/>
</dbReference>
<dbReference type="GO" id="GO:0035726">
    <property type="term" value="P:common myeloid progenitor cell proliferation"/>
    <property type="evidence" value="ECO:0007669"/>
    <property type="project" value="Ensembl"/>
</dbReference>
<dbReference type="GO" id="GO:0048147">
    <property type="term" value="P:negative regulation of fibroblast proliferation"/>
    <property type="evidence" value="ECO:0007669"/>
    <property type="project" value="Ensembl"/>
</dbReference>
<dbReference type="GO" id="GO:1900181">
    <property type="term" value="P:negative regulation of protein localization to nucleus"/>
    <property type="evidence" value="ECO:0007669"/>
    <property type="project" value="Ensembl"/>
</dbReference>
<dbReference type="GO" id="GO:1902916">
    <property type="term" value="P:positive regulation of protein polyubiquitination"/>
    <property type="evidence" value="ECO:0007669"/>
    <property type="project" value="Ensembl"/>
</dbReference>
<dbReference type="GO" id="GO:0031398">
    <property type="term" value="P:positive regulation of protein ubiquitination"/>
    <property type="evidence" value="ECO:0000314"/>
    <property type="project" value="BHF-UCL"/>
</dbReference>
<dbReference type="GO" id="GO:0032212">
    <property type="term" value="P:positive regulation of telomere maintenance via telomerase"/>
    <property type="evidence" value="ECO:0000315"/>
    <property type="project" value="BHF-UCL"/>
</dbReference>
<dbReference type="GO" id="GO:0010608">
    <property type="term" value="P:post-transcriptional regulation of gene expression"/>
    <property type="evidence" value="ECO:0007669"/>
    <property type="project" value="Ensembl"/>
</dbReference>
<dbReference type="GO" id="GO:0031648">
    <property type="term" value="P:protein destabilization"/>
    <property type="evidence" value="ECO:0007669"/>
    <property type="project" value="Ensembl"/>
</dbReference>
<dbReference type="GO" id="GO:0000209">
    <property type="term" value="P:protein polyubiquitination"/>
    <property type="evidence" value="ECO:0000314"/>
    <property type="project" value="UniProtKB"/>
</dbReference>
<dbReference type="GO" id="GO:0016567">
    <property type="term" value="P:protein ubiquitination"/>
    <property type="evidence" value="ECO:0000314"/>
    <property type="project" value="UniProtKB"/>
</dbReference>
<dbReference type="GO" id="GO:2000001">
    <property type="term" value="P:regulation of DNA damage checkpoint"/>
    <property type="evidence" value="ECO:0007669"/>
    <property type="project" value="Ensembl"/>
</dbReference>
<dbReference type="GO" id="GO:0031647">
    <property type="term" value="P:regulation of protein stability"/>
    <property type="evidence" value="ECO:0000314"/>
    <property type="project" value="BHF-UCL"/>
</dbReference>
<dbReference type="GO" id="GO:0031146">
    <property type="term" value="P:SCF-dependent proteasomal ubiquitin-dependent protein catabolic process"/>
    <property type="evidence" value="ECO:0000314"/>
    <property type="project" value="UniProtKB"/>
</dbReference>
<dbReference type="GO" id="GO:0000723">
    <property type="term" value="P:telomere maintenance"/>
    <property type="evidence" value="ECO:0000315"/>
    <property type="project" value="UniProtKB"/>
</dbReference>
<dbReference type="GO" id="GO:0006511">
    <property type="term" value="P:ubiquitin-dependent protein catabolic process"/>
    <property type="evidence" value="ECO:0000314"/>
    <property type="project" value="UniProtKB"/>
</dbReference>
<dbReference type="CDD" id="cd22085">
    <property type="entry name" value="F-box_FBXO4"/>
    <property type="match status" value="1"/>
</dbReference>
<dbReference type="CDD" id="cd11656">
    <property type="entry name" value="FBX4_GTPase_like"/>
    <property type="match status" value="1"/>
</dbReference>
<dbReference type="DisProt" id="DP01884"/>
<dbReference type="FunFam" id="3.40.50.300:FF:001110">
    <property type="entry name" value="F-box only protein 4"/>
    <property type="match status" value="1"/>
</dbReference>
<dbReference type="FunFam" id="1.20.1280.50:FF:000020">
    <property type="entry name" value="F-box only protein 4 (Predicted)"/>
    <property type="match status" value="1"/>
</dbReference>
<dbReference type="Gene3D" id="1.20.1280.50">
    <property type="match status" value="1"/>
</dbReference>
<dbReference type="Gene3D" id="3.40.50.300">
    <property type="entry name" value="P-loop containing nucleotide triphosphate hydrolases"/>
    <property type="match status" value="1"/>
</dbReference>
<dbReference type="IDEAL" id="IID00630"/>
<dbReference type="InterPro" id="IPR036047">
    <property type="entry name" value="F-box-like_dom_sf"/>
</dbReference>
<dbReference type="InterPro" id="IPR001810">
    <property type="entry name" value="F-box_dom"/>
</dbReference>
<dbReference type="InterPro" id="IPR039588">
    <property type="entry name" value="FBXO4"/>
</dbReference>
<dbReference type="InterPro" id="IPR027417">
    <property type="entry name" value="P-loop_NTPase"/>
</dbReference>
<dbReference type="PANTHER" id="PTHR16008">
    <property type="entry name" value="F-BOX ONLY PROTEIN 4"/>
    <property type="match status" value="1"/>
</dbReference>
<dbReference type="PANTHER" id="PTHR16008:SF4">
    <property type="entry name" value="F-BOX ONLY PROTEIN 4"/>
    <property type="match status" value="1"/>
</dbReference>
<dbReference type="Pfam" id="PF12937">
    <property type="entry name" value="F-box-like"/>
    <property type="match status" value="1"/>
</dbReference>
<dbReference type="SMART" id="SM00256">
    <property type="entry name" value="FBOX"/>
    <property type="match status" value="1"/>
</dbReference>
<dbReference type="SUPFAM" id="SSF81383">
    <property type="entry name" value="F-box domain"/>
    <property type="match status" value="1"/>
</dbReference>
<dbReference type="PROSITE" id="PS50181">
    <property type="entry name" value="FBOX"/>
    <property type="match status" value="1"/>
</dbReference>
<feature type="chain" id="PRO_0000119879" description="F-box only protein 4">
    <location>
        <begin position="1"/>
        <end position="387"/>
    </location>
</feature>
<feature type="domain" description="F-box" evidence="2">
    <location>
        <begin position="56"/>
        <end position="102"/>
    </location>
</feature>
<feature type="modified residue" description="Phosphoserine" evidence="5 11 12 13">
    <location>
        <position position="12"/>
    </location>
</feature>
<feature type="modified residue" description="Phosphoserine" evidence="12">
    <location>
        <position position="48"/>
    </location>
</feature>
<feature type="splice variant" id="VSP_012977" description="In isoform 2." evidence="9">
    <original>RHEWQDEF</original>
    <variation>SKYSYVHF</variation>
    <location>
        <begin position="300"/>
        <end position="307"/>
    </location>
</feature>
<feature type="splice variant" id="VSP_012978" description="In isoform 2." evidence="9">
    <location>
        <begin position="308"/>
        <end position="387"/>
    </location>
</feature>
<feature type="sequence variant" id="VAR_063500" description="In esophagus cancer samples; dbSNP:rs2231917." evidence="5">
    <original>S</original>
    <variation>R</variation>
    <location>
        <position position="8"/>
    </location>
</feature>
<feature type="sequence variant" id="VAR_063501" description="In esophagus cancer sample; impairs homodimerization and reduces ubiquitin ligase activity; dbSNP:rs1751443491." evidence="5">
    <original>S</original>
    <variation>L</variation>
    <location>
        <position position="12"/>
    </location>
</feature>
<feature type="sequence variant" id="VAR_063502" description="In esophagus cancer sample; dbSNP:rs1751443815." evidence="5">
    <original>P</original>
    <variation>S</variation>
    <location>
        <position position="13"/>
    </location>
</feature>
<feature type="sequence variant" id="VAR_063503" description="In esophagus cancer samples." evidence="5">
    <original>L</original>
    <variation>Q</variation>
    <location>
        <position position="23"/>
    </location>
</feature>
<feature type="sequence variant" id="VAR_063504" description="In esophagus cancer samples; impairs interaction with SKP1." evidence="5">
    <original>P</original>
    <variation>T</variation>
    <location>
        <position position="76"/>
    </location>
</feature>
<feature type="mutagenesis site" description="Reduces homodimerization. Reduces ubiquitination of CCND1." evidence="5">
    <original>S</original>
    <variation>A</variation>
    <location>
        <position position="12"/>
    </location>
</feature>
<feature type="mutagenesis site" description="No effect on homodimerization." evidence="5">
    <original>S</original>
    <variation>E</variation>
    <location>
        <position position="12"/>
    </location>
</feature>
<feature type="mutagenesis site" description="Reduces homodimerization." evidence="5">
    <original>P</original>
    <variation>A</variation>
    <location>
        <position position="13"/>
    </location>
</feature>
<feature type="mutagenesis site" description="Abolishes homodimerization." evidence="5">
    <original>L</original>
    <variation>A</variation>
    <location>
        <position position="23"/>
    </location>
</feature>
<feature type="mutagenesis site" description="Abolishes interaction with TERF1." evidence="6">
    <original>C</original>
    <variation>W</variation>
    <location>
        <position position="341"/>
    </location>
</feature>
<feature type="mutagenesis site" description="Abolishes interaction with TERF1." evidence="6">
    <original>A</original>
    <variation>R</variation>
    <location>
        <position position="345"/>
    </location>
</feature>
<feature type="sequence conflict" description="In Ref. 1; AAF04468." evidence="10" ref="1">
    <original>E</original>
    <variation>D</variation>
    <location>
        <position position="41"/>
    </location>
</feature>
<feature type="sequence conflict" description="In Ref. 1; AAF04468." evidence="10" ref="1">
    <original>D</original>
    <variation>N</variation>
    <location>
        <position position="95"/>
    </location>
</feature>
<feature type="sequence conflict" description="In Ref. 1; AAF04468." evidence="10" ref="1">
    <original>DLE</original>
    <variation>YLQ</variation>
    <location>
        <begin position="120"/>
        <end position="122"/>
    </location>
</feature>
<feature type="sequence conflict" description="In Ref. 1; AAF04468." evidence="10" ref="1">
    <original>T</original>
    <variation>S</variation>
    <location>
        <position position="132"/>
    </location>
</feature>
<feature type="sequence conflict" description="In Ref. 1; AAF04468." evidence="10" ref="1">
    <original>R</original>
    <variation>L</variation>
    <location>
        <position position="144"/>
    </location>
</feature>
<feature type="sequence conflict" description="In Ref. 1; AAF04468." evidence="10" ref="1">
    <original>Q</original>
    <variation>P</variation>
    <location>
        <position position="174"/>
    </location>
</feature>
<feature type="sequence conflict" description="In Ref. 1; AAF04468." evidence="10" ref="1">
    <original>M</original>
    <variation>L</variation>
    <location>
        <position position="181"/>
    </location>
</feature>
<feature type="sequence conflict" description="In Ref. 1; AAF04468." evidence="10" ref="1">
    <original>G</original>
    <variation>R</variation>
    <location>
        <position position="185"/>
    </location>
</feature>
<feature type="sequence conflict" description="In Ref. 1; AAF04468." evidence="10" ref="1">
    <original>E</original>
    <variation>Q</variation>
    <location>
        <position position="188"/>
    </location>
</feature>
<feature type="sequence conflict" description="In Ref. 1; AAF04468." evidence="10" ref="1">
    <original>M</original>
    <variation>L</variation>
    <location>
        <position position="198"/>
    </location>
</feature>
<feature type="sequence conflict" description="In Ref. 1; AAF04468." evidence="10" ref="1">
    <original>QQ</original>
    <variation>RP</variation>
    <location>
        <begin position="268"/>
        <end position="269"/>
    </location>
</feature>
<feature type="sequence conflict" description="In Ref. 1; AAF04468." evidence="10" ref="1">
    <original>V</original>
    <variation>L</variation>
    <location>
        <position position="282"/>
    </location>
</feature>
<feature type="helix" evidence="14">
    <location>
        <begin position="58"/>
        <end position="61"/>
    </location>
</feature>
<feature type="helix" evidence="14">
    <location>
        <begin position="64"/>
        <end position="72"/>
    </location>
</feature>
<feature type="helix" evidence="14">
    <location>
        <begin position="76"/>
        <end position="83"/>
    </location>
</feature>
<feature type="helix" evidence="14">
    <location>
        <begin position="87"/>
        <end position="93"/>
    </location>
</feature>
<feature type="helix" evidence="14">
    <location>
        <begin position="96"/>
        <end position="104"/>
    </location>
</feature>
<feature type="helix" evidence="14">
    <location>
        <begin position="107"/>
        <end position="109"/>
    </location>
</feature>
<feature type="helix" evidence="14">
    <location>
        <begin position="115"/>
        <end position="117"/>
    </location>
</feature>
<feature type="helix" evidence="14">
    <location>
        <begin position="122"/>
        <end position="125"/>
    </location>
</feature>
<feature type="helix" evidence="14">
    <location>
        <begin position="139"/>
        <end position="146"/>
    </location>
</feature>
<feature type="strand" evidence="15">
    <location>
        <begin position="167"/>
        <end position="169"/>
    </location>
</feature>
<feature type="strand" evidence="15">
    <location>
        <begin position="178"/>
        <end position="182"/>
    </location>
</feature>
<feature type="helix" evidence="15">
    <location>
        <begin position="184"/>
        <end position="186"/>
    </location>
</feature>
<feature type="strand" evidence="15">
    <location>
        <begin position="188"/>
        <end position="191"/>
    </location>
</feature>
<feature type="helix" evidence="15">
    <location>
        <begin position="193"/>
        <end position="198"/>
    </location>
</feature>
<feature type="helix" evidence="14">
    <location>
        <begin position="201"/>
        <end position="203"/>
    </location>
</feature>
<feature type="helix" evidence="15">
    <location>
        <begin position="210"/>
        <end position="212"/>
    </location>
</feature>
<feature type="strand" evidence="14">
    <location>
        <begin position="215"/>
        <end position="217"/>
    </location>
</feature>
<feature type="strand" evidence="15">
    <location>
        <begin position="221"/>
        <end position="228"/>
    </location>
</feature>
<feature type="strand" evidence="15">
    <location>
        <begin position="230"/>
        <end position="235"/>
    </location>
</feature>
<feature type="helix" evidence="15">
    <location>
        <begin position="279"/>
        <end position="285"/>
    </location>
</feature>
<feature type="strand" evidence="15">
    <location>
        <begin position="287"/>
        <end position="294"/>
    </location>
</feature>
<feature type="helix" evidence="15">
    <location>
        <begin position="303"/>
        <end position="313"/>
    </location>
</feature>
<feature type="helix" evidence="14">
    <location>
        <begin position="316"/>
        <end position="319"/>
    </location>
</feature>
<feature type="strand" evidence="15">
    <location>
        <begin position="325"/>
        <end position="333"/>
    </location>
</feature>
<feature type="helix" evidence="15">
    <location>
        <begin position="341"/>
        <end position="347"/>
    </location>
</feature>
<feature type="helix" evidence="15">
    <location>
        <begin position="350"/>
        <end position="353"/>
    </location>
</feature>
<feature type="strand" evidence="15">
    <location>
        <begin position="357"/>
        <end position="363"/>
    </location>
</feature>
<feature type="turn" evidence="15">
    <location>
        <begin position="364"/>
        <end position="366"/>
    </location>
</feature>
<feature type="helix" evidence="15">
    <location>
        <begin position="370"/>
        <end position="377"/>
    </location>
</feature>
<feature type="turn" evidence="15">
    <location>
        <begin position="378"/>
        <end position="383"/>
    </location>
</feature>
<name>FBX4_HUMAN</name>
<reference key="1">
    <citation type="journal article" date="1999" name="Curr. Biol.">
        <title>Identification of a family of human F-box proteins.</title>
        <authorList>
            <person name="Cenciarelli C."/>
            <person name="Chiaur D.S."/>
            <person name="Guardavaccaro D."/>
            <person name="Parks W."/>
            <person name="Vidal M."/>
            <person name="Pagano M."/>
        </authorList>
    </citation>
    <scope>NUCLEOTIDE SEQUENCE [MRNA] (ISOFORM 1)</scope>
    <scope>FUNCTION</scope>
    <scope>INTERACTION WITH SKP1 AND CUL1</scope>
</reference>
<reference key="2">
    <citation type="journal article" date="1999" name="Curr. Biol.">
        <title>A family of mammalian F-box proteins.</title>
        <authorList>
            <person name="Winston J.T."/>
            <person name="Koepp D.M."/>
            <person name="Zhu C."/>
            <person name="Elledge S.J."/>
            <person name="Harper J.W."/>
        </authorList>
    </citation>
    <scope>NUCLEOTIDE SEQUENCE [MRNA] (ISOFORM 2)</scope>
</reference>
<reference key="3">
    <citation type="journal article" date="2004" name="Genome Res.">
        <title>The status, quality, and expansion of the NIH full-length cDNA project: the Mammalian Gene Collection (MGC).</title>
        <authorList>
            <consortium name="The MGC Project Team"/>
        </authorList>
    </citation>
    <scope>NUCLEOTIDE SEQUENCE [LARGE SCALE MRNA] (ISOFORM 1)</scope>
    <source>
        <tissue>Testis</tissue>
    </source>
</reference>
<reference key="4">
    <citation type="journal article" date="2007" name="BMC Genomics">
        <title>The full-ORF clone resource of the German cDNA consortium.</title>
        <authorList>
            <person name="Bechtel S."/>
            <person name="Rosenfelder H."/>
            <person name="Duda A."/>
            <person name="Schmidt C.P."/>
            <person name="Ernst U."/>
            <person name="Wellenreuther R."/>
            <person name="Mehrle A."/>
            <person name="Schuster C."/>
            <person name="Bahr A."/>
            <person name="Bloecker H."/>
            <person name="Heubner D."/>
            <person name="Hoerlein A."/>
            <person name="Michel G."/>
            <person name="Wedler H."/>
            <person name="Koehrer K."/>
            <person name="Ottenwaelder B."/>
            <person name="Poustka A."/>
            <person name="Wiemann S."/>
            <person name="Schupp I."/>
        </authorList>
    </citation>
    <scope>NUCLEOTIDE SEQUENCE [LARGE SCALE MRNA] OF 144-387</scope>
    <source>
        <tissue>Fetal brain</tissue>
    </source>
</reference>
<reference key="5">
    <citation type="journal article" date="2006" name="J. Biol. Chem.">
        <title>The F-box protein FBX4 targets PIN2/TRF1 for ubiquitin-mediated degradation and regulates telomere maintenance.</title>
        <authorList>
            <person name="Lee T.H."/>
            <person name="Perrem K."/>
            <person name="Harper J.W."/>
            <person name="Lu K.P."/>
            <person name="Zhou X.Z."/>
        </authorList>
    </citation>
    <scope>INTERACTION WITH TERF1</scope>
    <scope>FUNCTION IN UBIQUITINATION OF TERF1</scope>
    <scope>PATHWAY</scope>
</reference>
<reference key="6">
    <citation type="journal article" date="2008" name="Cancer Cell">
        <title>Mutations in Fbx4 inhibit dimerization of the SCF(Fbx4) ligase and contribute to cyclin D1 overexpression in human cancer.</title>
        <authorList>
            <person name="Barbash O."/>
            <person name="Zamfirova P."/>
            <person name="Lin D.I."/>
            <person name="Chen X."/>
            <person name="Yang K."/>
            <person name="Nakagawa H."/>
            <person name="Lu F."/>
            <person name="Rustgi A.K."/>
            <person name="Diehl J.A."/>
        </authorList>
    </citation>
    <scope>FUNCTION</scope>
    <scope>SUBUNIT</scope>
    <scope>PATHWAY</scope>
    <scope>INTERACTION WITH SKP1</scope>
    <scope>MUTAGENESIS OF SER-12; PRO-13 AND LEU-23</scope>
    <scope>PHOSPHORYLATION AT SER-12</scope>
    <scope>VARIANTS ARG-8; LEU-12; SER-13; GLN-23 AND THR-76</scope>
    <scope>CHARACTERIZATION OF VARIANTS LEU-12; SER-13 AND GLN-23</scope>
</reference>
<reference key="7">
    <citation type="journal article" date="2009" name="Sci. Signal.">
        <title>Quantitative phosphoproteomic analysis of T cell receptor signaling reveals system-wide modulation of protein-protein interactions.</title>
        <authorList>
            <person name="Mayya V."/>
            <person name="Lundgren D.H."/>
            <person name="Hwang S.-I."/>
            <person name="Rezaul K."/>
            <person name="Wu L."/>
            <person name="Eng J.K."/>
            <person name="Rodionov V."/>
            <person name="Han D.K."/>
        </authorList>
    </citation>
    <scope>PHOSPHORYLATION [LARGE SCALE ANALYSIS] AT SER-12</scope>
    <scope>IDENTIFICATION BY MASS SPECTROMETRY [LARGE SCALE ANALYSIS]</scope>
    <source>
        <tissue>Leukemic T-cell</tissue>
    </source>
</reference>
<reference key="8">
    <citation type="journal article" date="2013" name="J. Proteome Res.">
        <title>Toward a comprehensive characterization of a human cancer cell phosphoproteome.</title>
        <authorList>
            <person name="Zhou H."/>
            <person name="Di Palma S."/>
            <person name="Preisinger C."/>
            <person name="Peng M."/>
            <person name="Polat A.N."/>
            <person name="Heck A.J."/>
            <person name="Mohammed S."/>
        </authorList>
    </citation>
    <scope>PHOSPHORYLATION [LARGE SCALE ANALYSIS] AT SER-12 AND SER-48</scope>
    <scope>IDENTIFICATION BY MASS SPECTROMETRY [LARGE SCALE ANALYSIS]</scope>
    <source>
        <tissue>Cervix carcinoma</tissue>
        <tissue>Erythroleukemia</tissue>
    </source>
</reference>
<reference key="9">
    <citation type="journal article" date="2014" name="J. Proteomics">
        <title>An enzyme assisted RP-RPLC approach for in-depth analysis of human liver phosphoproteome.</title>
        <authorList>
            <person name="Bian Y."/>
            <person name="Song C."/>
            <person name="Cheng K."/>
            <person name="Dong M."/>
            <person name="Wang F."/>
            <person name="Huang J."/>
            <person name="Sun D."/>
            <person name="Wang L."/>
            <person name="Ye M."/>
            <person name="Zou H."/>
        </authorList>
    </citation>
    <scope>PHOSPHORYLATION [LARGE SCALE ANALYSIS] AT SER-12</scope>
    <scope>IDENTIFICATION BY MASS SPECTROMETRY [LARGE SCALE ANALYSIS]</scope>
    <source>
        <tissue>Liver</tissue>
    </source>
</reference>
<reference key="10">
    <citation type="journal article" date="2017" name="Nat. Commun.">
        <title>Fbxo4-mediated degradation of Fxr1 suppresses tumorigenesis in head and neck squamous cell carcinoma.</title>
        <authorList>
            <person name="Qie S."/>
            <person name="Majumder M."/>
            <person name="Mackiewicz K."/>
            <person name="Howley B.V."/>
            <person name="Peterson Y.K."/>
            <person name="Howe P.H."/>
            <person name="Palanisamy V."/>
            <person name="Diehl J.A."/>
        </authorList>
    </citation>
    <scope>FUNCTION</scope>
    <scope>PATHWAY</scope>
</reference>
<reference key="11">
    <citation type="journal article" date="2010" name="Dev. Cell">
        <title>Structural basis of selective ubiquitination of TRF1 by SCFFbx4.</title>
        <authorList>
            <person name="Zeng Z."/>
            <person name="Wang W."/>
            <person name="Yang Y."/>
            <person name="Chen Y."/>
            <person name="Yang X."/>
            <person name="Diehl J.A."/>
            <person name="Liu X."/>
            <person name="Lei M."/>
        </authorList>
    </citation>
    <scope>X-RAY CRYSTALLOGRAPHY (2.4 ANGSTROMS) OF 162-387 IN COMPLEX WITH TERF1</scope>
    <scope>FUNCTION</scope>
    <scope>PATHWAY</scope>
    <scope>MUTAGENESIS OF CYS-341 AND ALA-345</scope>
    <scope>SUBUNIT</scope>
</reference>
<reference key="12">
    <citation type="journal article" date="2010" name="J. Biol. Chem.">
        <title>Structural basis of dimerization-dependent ubiquitination by the SCF(Fbx4) ubiquitin ligase.</title>
        <authorList>
            <person name="Li Y."/>
            <person name="Hao B."/>
        </authorList>
    </citation>
    <scope>X-RAY CRYSTALLOGRAPHY (2.8 ANGSTROMS) OF 55-387 IN COMPLEX WITH SKP1</scope>
    <scope>FUNCTION</scope>
    <scope>SUBUNIT</scope>
    <scope>PATHWAY</scope>
</reference>
<sequence length="387" mass="44136">MAGSEPRSGTNSPPPPFSDWGRLEAAILSGWKTFWQSVSKERVARTTSREEVDEAASTLTRLPIDVQLYILSFLSPHDLCQLGSTNHYWNETVRDPILWRYFLLRDLPSWSSVDWKSLPDLEILKKPISEVTDGAFFDYMAVYRMCCPYTRRASKSSRPMYGAVTSFLHSLIIQNEPRFAMFGPGLEELNTSLVLSLMSSEELCPTAGLPQRQIDGIGSGVNFQLNNQHKFNILILYSTTRKERDRAREEHTSAVNKMFSRHNEGDDQQGSRYSVIPQIQKVCEVVDGFIYVANAEAHKRHEWQDEFSHIMAMTDPAFGSSGRPLLVLSCISQGDVKRMPCFYLAHELHLNLLNHPWLVQDTEAETLTGFLNGIEWILEEVESKRAR</sequence>
<organism>
    <name type="scientific">Homo sapiens</name>
    <name type="common">Human</name>
    <dbReference type="NCBI Taxonomy" id="9606"/>
    <lineage>
        <taxon>Eukaryota</taxon>
        <taxon>Metazoa</taxon>
        <taxon>Chordata</taxon>
        <taxon>Craniata</taxon>
        <taxon>Vertebrata</taxon>
        <taxon>Euteleostomi</taxon>
        <taxon>Mammalia</taxon>
        <taxon>Eutheria</taxon>
        <taxon>Euarchontoglires</taxon>
        <taxon>Primates</taxon>
        <taxon>Haplorrhini</taxon>
        <taxon>Catarrhini</taxon>
        <taxon>Hominidae</taxon>
        <taxon>Homo</taxon>
    </lineage>
</organism>
<evidence type="ECO:0000250" key="1">
    <source>
        <dbReference type="UniProtKB" id="Q8CHQ0"/>
    </source>
</evidence>
<evidence type="ECO:0000255" key="2">
    <source>
        <dbReference type="PROSITE-ProRule" id="PRU00080"/>
    </source>
</evidence>
<evidence type="ECO:0000269" key="3">
    <source>
    </source>
</evidence>
<evidence type="ECO:0000269" key="4">
    <source>
    </source>
</evidence>
<evidence type="ECO:0000269" key="5">
    <source>
    </source>
</evidence>
<evidence type="ECO:0000269" key="6">
    <source>
    </source>
</evidence>
<evidence type="ECO:0000269" key="7">
    <source>
    </source>
</evidence>
<evidence type="ECO:0000269" key="8">
    <source>
    </source>
</evidence>
<evidence type="ECO:0000303" key="9">
    <source>
    </source>
</evidence>
<evidence type="ECO:0000305" key="10"/>
<evidence type="ECO:0007744" key="11">
    <source>
    </source>
</evidence>
<evidence type="ECO:0007744" key="12">
    <source>
    </source>
</evidence>
<evidence type="ECO:0007744" key="13">
    <source>
    </source>
</evidence>
<evidence type="ECO:0007829" key="14">
    <source>
        <dbReference type="PDB" id="3L2O"/>
    </source>
</evidence>
<evidence type="ECO:0007829" key="15">
    <source>
        <dbReference type="PDB" id="3L82"/>
    </source>
</evidence>
<protein>
    <recommendedName>
        <fullName>F-box only protein 4</fullName>
    </recommendedName>
</protein>
<accession>Q9UKT5</accession>
<accession>Q68CU8</accession>
<accession>Q86VT8</accession>
<accession>Q9UK98</accession>
<gene>
    <name type="primary">FBXO4</name>
    <name type="synonym">FBX4</name>
</gene>
<proteinExistence type="evidence at protein level"/>
<comment type="function">
    <text evidence="1 3 4 5 6 7 8">Substrate recognition component of a SCF (SKP1-CUL1-F-box protein) E3 ubiquitin-protein ligase complex that mediates the ubiquitination and subsequent proteasomal degradation of target proteins (PubMed:10531035, PubMed:18598945, PubMed:20181953, PubMed:29142209). Promotes ubiquitination of cyclin-D1 (CCND1) and its subsequent proteasomal degradation (PubMed:18598945). However, it does not act as a major regulator of CCND1 stability during the G1/S transition (By similarity). Recognizes TERF1 and promotes its ubiquitination together with UBE2D1 (PubMed:16275645, PubMed:20159592). Promotes ubiquitination of FXR1 following phosphorylation of FXR1 by GSK3B, leading to FXR1 degradation by the proteasome (PubMed:29142209).</text>
</comment>
<comment type="pathway">
    <text evidence="3 4 5 6 7 8">Protein modification; protein ubiquitination.</text>
</comment>
<comment type="subunit">
    <text evidence="1 3 4 5 6 7">Homodimer (PubMed:18598945, PubMed:20181953). Part of the SCF (SKP1-CUL1-F-box) E3 ubiquitin-protein ligase complex SCF(FBXO4) formed of CUL1, SKP1, RBX1 and FBXO4 (PubMed:10531035, PubMed:18598945, PubMed:20181953). Interacts with TERF1; this interaction is prevented in the presence of GNL3L (PubMed:16275645, PubMed:20159592). Identified in a complex with CRYAB and CCND1 (By similarity).</text>
</comment>
<comment type="interaction">
    <interactant intactId="EBI-960409">
        <id>Q9UKT5</id>
    </interactant>
    <interactant intactId="EBI-359390">
        <id>Q13616</id>
        <label>CUL1</label>
    </interactant>
    <organismsDiffer>false</organismsDiffer>
    <experiments>5</experiments>
</comment>
<comment type="interaction">
    <interactant intactId="EBI-960409">
        <id>Q9UKT5</id>
    </interactant>
    <interactant intactId="EBI-307486">
        <id>P63208</id>
        <label>SKP1</label>
    </interactant>
    <organismsDiffer>false</organismsDiffer>
    <experiments>19</experiments>
</comment>
<comment type="interaction">
    <interactant intactId="EBI-960409">
        <id>Q9UKT5</id>
    </interactant>
    <interactant intactId="EBI-372899">
        <id>Q13148</id>
        <label>TARDBP</label>
    </interactant>
    <organismsDiffer>false</organismsDiffer>
    <experiments>3</experiments>
</comment>
<comment type="interaction">
    <interactant intactId="EBI-960409">
        <id>Q9UKT5</id>
    </interactant>
    <interactant intactId="EBI-704142">
        <id>Q59H18</id>
        <label>TNNI3K</label>
    </interactant>
    <organismsDiffer>false</organismsDiffer>
    <experiments>3</experiments>
</comment>
<comment type="interaction">
    <interactant intactId="EBI-960409">
        <id>Q9UKT5</id>
    </interactant>
    <interactant intactId="EBI-720609">
        <id>O76024</id>
        <label>WFS1</label>
    </interactant>
    <organismsDiffer>false</organismsDiffer>
    <experiments>3</experiments>
</comment>
<comment type="interaction">
    <interactant intactId="EBI-960409">
        <id>Q9UKT5</id>
    </interactant>
    <interactant intactId="EBI-356498">
        <id>P62258</id>
        <label>YWHAE</label>
    </interactant>
    <organismsDiffer>false</organismsDiffer>
    <experiments>5</experiments>
</comment>
<comment type="interaction">
    <interactant intactId="EBI-960409">
        <id>Q9UKT5</id>
    </interactant>
    <interactant intactId="EBI-356462">
        <id>P62260</id>
        <label>Ywhae</label>
    </interactant>
    <organismsDiffer>true</organismsDiffer>
    <experiments>2</experiments>
</comment>
<comment type="interaction">
    <interactant intactId="EBI-960421">
        <id>Q9UKT5-1</id>
    </interactant>
    <interactant intactId="EBI-710997">
        <id>P54274</id>
        <label>TERF1</label>
    </interactant>
    <organismsDiffer>false</organismsDiffer>
    <experiments>2</experiments>
</comment>
<comment type="interaction">
    <interactant intactId="EBI-960421">
        <id>Q9UKT5-1</id>
    </interactant>
    <interactant intactId="EBI-711018">
        <id>P54274-2</id>
        <label>TERF1</label>
    </interactant>
    <organismsDiffer>false</organismsDiffer>
    <experiments>3</experiments>
</comment>
<comment type="subcellular location">
    <subcellularLocation>
        <location evidence="1">Cytoplasm</location>
    </subcellularLocation>
</comment>
<comment type="alternative products">
    <event type="alternative splicing"/>
    <isoform>
        <id>Q9UKT5-1</id>
        <name>1</name>
        <sequence type="displayed"/>
    </isoform>
    <isoform>
        <id>Q9UKT5-2</id>
        <name>2</name>
        <sequence type="described" ref="VSP_012977 VSP_012978"/>
    </isoform>
</comment>
<comment type="PTM">
    <text evidence="1 5">Phosphorylation at Ser-12 varies during the cell cycle (By similarity). It is low in resting cells and high in the S phase and the G2/M phase of the cell cycle. Phosphorylation is decreased during late G1 phase (By similarity). Phosphorylation at Ser-12 promotes homodimerization and is necessary for optimal ubiquitin ligase activity towards CCND1 (PubMed:18598945).</text>
</comment>
<keyword id="KW-0002">3D-structure</keyword>
<keyword id="KW-0025">Alternative splicing</keyword>
<keyword id="KW-0963">Cytoplasm</keyword>
<keyword id="KW-0597">Phosphoprotein</keyword>
<keyword id="KW-1267">Proteomics identification</keyword>
<keyword id="KW-1185">Reference proteome</keyword>
<keyword id="KW-0833">Ubl conjugation pathway</keyword>